<protein>
    <recommendedName>
        <fullName evidence="1">Aspartyl/glutamyl-tRNA(Asn/Gln) amidotransferase subunit B</fullName>
        <shortName evidence="1">Asp/Glu-ADT subunit B</shortName>
        <ecNumber evidence="1">6.3.5.-</ecNumber>
    </recommendedName>
</protein>
<accession>B3CQQ8</accession>
<organism>
    <name type="scientific">Orientia tsutsugamushi (strain Ikeda)</name>
    <name type="common">Rickettsia tsutsugamushi</name>
    <dbReference type="NCBI Taxonomy" id="334380"/>
    <lineage>
        <taxon>Bacteria</taxon>
        <taxon>Pseudomonadati</taxon>
        <taxon>Pseudomonadota</taxon>
        <taxon>Alphaproteobacteria</taxon>
        <taxon>Rickettsiales</taxon>
        <taxon>Rickettsiaceae</taxon>
        <taxon>Rickettsieae</taxon>
        <taxon>Orientia</taxon>
    </lineage>
</organism>
<dbReference type="EC" id="6.3.5.-" evidence="1"/>
<dbReference type="EMBL" id="AP008981">
    <property type="protein sequence ID" value="BAG39824.1"/>
    <property type="molecule type" value="Genomic_DNA"/>
</dbReference>
<dbReference type="RefSeq" id="WP_012461051.1">
    <property type="nucleotide sequence ID" value="NC_010793.1"/>
</dbReference>
<dbReference type="SMR" id="B3CQQ8"/>
<dbReference type="KEGG" id="ott:OTT_0366"/>
<dbReference type="HOGENOM" id="CLU_019240_1_1_5"/>
<dbReference type="OrthoDB" id="9804078at2"/>
<dbReference type="Proteomes" id="UP000001033">
    <property type="component" value="Chromosome"/>
</dbReference>
<dbReference type="GO" id="GO:0030956">
    <property type="term" value="C:glutamyl-tRNA(Gln) amidotransferase complex"/>
    <property type="evidence" value="ECO:0007669"/>
    <property type="project" value="TreeGrafter"/>
</dbReference>
<dbReference type="GO" id="GO:0050566">
    <property type="term" value="F:asparaginyl-tRNA synthase (glutamine-hydrolyzing) activity"/>
    <property type="evidence" value="ECO:0007669"/>
    <property type="project" value="RHEA"/>
</dbReference>
<dbReference type="GO" id="GO:0005524">
    <property type="term" value="F:ATP binding"/>
    <property type="evidence" value="ECO:0007669"/>
    <property type="project" value="UniProtKB-KW"/>
</dbReference>
<dbReference type="GO" id="GO:0050567">
    <property type="term" value="F:glutaminyl-tRNA synthase (glutamine-hydrolyzing) activity"/>
    <property type="evidence" value="ECO:0007669"/>
    <property type="project" value="UniProtKB-UniRule"/>
</dbReference>
<dbReference type="GO" id="GO:0070681">
    <property type="term" value="P:glutaminyl-tRNAGln biosynthesis via transamidation"/>
    <property type="evidence" value="ECO:0007669"/>
    <property type="project" value="TreeGrafter"/>
</dbReference>
<dbReference type="GO" id="GO:0006412">
    <property type="term" value="P:translation"/>
    <property type="evidence" value="ECO:0007669"/>
    <property type="project" value="UniProtKB-UniRule"/>
</dbReference>
<dbReference type="FunFam" id="1.10.10.410:FF:000001">
    <property type="entry name" value="Aspartyl/glutamyl-tRNA(Asn/Gln) amidotransferase subunit B"/>
    <property type="match status" value="1"/>
</dbReference>
<dbReference type="Gene3D" id="1.10.10.410">
    <property type="match status" value="1"/>
</dbReference>
<dbReference type="Gene3D" id="1.10.150.380">
    <property type="entry name" value="GatB domain, N-terminal subdomain"/>
    <property type="match status" value="1"/>
</dbReference>
<dbReference type="HAMAP" id="MF_00121">
    <property type="entry name" value="GatB"/>
    <property type="match status" value="1"/>
</dbReference>
<dbReference type="InterPro" id="IPR017959">
    <property type="entry name" value="Asn/Gln-tRNA_amidoTrfase_suB/E"/>
</dbReference>
<dbReference type="InterPro" id="IPR006075">
    <property type="entry name" value="Asn/Gln-tRNA_Trfase_suB/E_cat"/>
</dbReference>
<dbReference type="InterPro" id="IPR018027">
    <property type="entry name" value="Asn/Gln_amidotransferase"/>
</dbReference>
<dbReference type="InterPro" id="IPR003789">
    <property type="entry name" value="Asn/Gln_tRNA_amidoTrase-B-like"/>
</dbReference>
<dbReference type="InterPro" id="IPR004413">
    <property type="entry name" value="GatB"/>
</dbReference>
<dbReference type="InterPro" id="IPR042114">
    <property type="entry name" value="GatB_C_1"/>
</dbReference>
<dbReference type="InterPro" id="IPR023168">
    <property type="entry name" value="GatB_Yqey_C_2"/>
</dbReference>
<dbReference type="InterPro" id="IPR017958">
    <property type="entry name" value="Gln-tRNA_amidoTrfase_suB_CS"/>
</dbReference>
<dbReference type="InterPro" id="IPR014746">
    <property type="entry name" value="Gln_synth/guanido_kin_cat_dom"/>
</dbReference>
<dbReference type="NCBIfam" id="TIGR00133">
    <property type="entry name" value="gatB"/>
    <property type="match status" value="1"/>
</dbReference>
<dbReference type="NCBIfam" id="NF004012">
    <property type="entry name" value="PRK05477.1-2"/>
    <property type="match status" value="1"/>
</dbReference>
<dbReference type="NCBIfam" id="NF004014">
    <property type="entry name" value="PRK05477.1-4"/>
    <property type="match status" value="1"/>
</dbReference>
<dbReference type="NCBIfam" id="NF004015">
    <property type="entry name" value="PRK05477.1-5"/>
    <property type="match status" value="1"/>
</dbReference>
<dbReference type="PANTHER" id="PTHR11659">
    <property type="entry name" value="GLUTAMYL-TRNA GLN AMIDOTRANSFERASE SUBUNIT B MITOCHONDRIAL AND PROKARYOTIC PET112-RELATED"/>
    <property type="match status" value="1"/>
</dbReference>
<dbReference type="PANTHER" id="PTHR11659:SF0">
    <property type="entry name" value="GLUTAMYL-TRNA(GLN) AMIDOTRANSFERASE SUBUNIT B, MITOCHONDRIAL"/>
    <property type="match status" value="1"/>
</dbReference>
<dbReference type="Pfam" id="PF02934">
    <property type="entry name" value="GatB_N"/>
    <property type="match status" value="1"/>
</dbReference>
<dbReference type="Pfam" id="PF02637">
    <property type="entry name" value="GatB_Yqey"/>
    <property type="match status" value="1"/>
</dbReference>
<dbReference type="SMART" id="SM00845">
    <property type="entry name" value="GatB_Yqey"/>
    <property type="match status" value="1"/>
</dbReference>
<dbReference type="SUPFAM" id="SSF89095">
    <property type="entry name" value="GatB/YqeY motif"/>
    <property type="match status" value="1"/>
</dbReference>
<dbReference type="SUPFAM" id="SSF55931">
    <property type="entry name" value="Glutamine synthetase/guanido kinase"/>
    <property type="match status" value="1"/>
</dbReference>
<dbReference type="PROSITE" id="PS01234">
    <property type="entry name" value="GATB"/>
    <property type="match status" value="1"/>
</dbReference>
<proteinExistence type="inferred from homology"/>
<name>GATB_ORITI</name>
<keyword id="KW-0067">ATP-binding</keyword>
<keyword id="KW-0436">Ligase</keyword>
<keyword id="KW-0547">Nucleotide-binding</keyword>
<keyword id="KW-0648">Protein biosynthesis</keyword>
<reference key="1">
    <citation type="journal article" date="2008" name="DNA Res.">
        <title>The whole-genome sequencing of the obligate intracellular bacterium Orientia tsutsugamushi revealed massive gene amplification during reductive genome evolution.</title>
        <authorList>
            <person name="Nakayama K."/>
            <person name="Yamashita A."/>
            <person name="Kurokawa K."/>
            <person name="Morimoto T."/>
            <person name="Ogawa M."/>
            <person name="Fukuhara M."/>
            <person name="Urakami H."/>
            <person name="Ohnishi M."/>
            <person name="Uchiyama I."/>
            <person name="Ogura Y."/>
            <person name="Ooka T."/>
            <person name="Oshima K."/>
            <person name="Tamura A."/>
            <person name="Hattori M."/>
            <person name="Hayashi T."/>
        </authorList>
    </citation>
    <scope>NUCLEOTIDE SEQUENCE [LARGE SCALE GENOMIC DNA]</scope>
    <source>
        <strain>Ikeda</strain>
    </source>
</reference>
<gene>
    <name evidence="1" type="primary">gatB</name>
    <name type="ordered locus">OTT_0366</name>
</gene>
<feature type="chain" id="PRO_1000095231" description="Aspartyl/glutamyl-tRNA(Asn/Gln) amidotransferase subunit B">
    <location>
        <begin position="1"/>
        <end position="486"/>
    </location>
</feature>
<comment type="function">
    <text evidence="1">Allows the formation of correctly charged Asn-tRNA(Asn) or Gln-tRNA(Gln) through the transamidation of misacylated Asp-tRNA(Asn) or Glu-tRNA(Gln) in organisms which lack either or both of asparaginyl-tRNA or glutaminyl-tRNA synthetases. The reaction takes place in the presence of glutamine and ATP through an activated phospho-Asp-tRNA(Asn) or phospho-Glu-tRNA(Gln).</text>
</comment>
<comment type="catalytic activity">
    <reaction evidence="1">
        <text>L-glutamyl-tRNA(Gln) + L-glutamine + ATP + H2O = L-glutaminyl-tRNA(Gln) + L-glutamate + ADP + phosphate + H(+)</text>
        <dbReference type="Rhea" id="RHEA:17521"/>
        <dbReference type="Rhea" id="RHEA-COMP:9681"/>
        <dbReference type="Rhea" id="RHEA-COMP:9684"/>
        <dbReference type="ChEBI" id="CHEBI:15377"/>
        <dbReference type="ChEBI" id="CHEBI:15378"/>
        <dbReference type="ChEBI" id="CHEBI:29985"/>
        <dbReference type="ChEBI" id="CHEBI:30616"/>
        <dbReference type="ChEBI" id="CHEBI:43474"/>
        <dbReference type="ChEBI" id="CHEBI:58359"/>
        <dbReference type="ChEBI" id="CHEBI:78520"/>
        <dbReference type="ChEBI" id="CHEBI:78521"/>
        <dbReference type="ChEBI" id="CHEBI:456216"/>
    </reaction>
</comment>
<comment type="catalytic activity">
    <reaction evidence="1">
        <text>L-aspartyl-tRNA(Asn) + L-glutamine + ATP + H2O = L-asparaginyl-tRNA(Asn) + L-glutamate + ADP + phosphate + 2 H(+)</text>
        <dbReference type="Rhea" id="RHEA:14513"/>
        <dbReference type="Rhea" id="RHEA-COMP:9674"/>
        <dbReference type="Rhea" id="RHEA-COMP:9677"/>
        <dbReference type="ChEBI" id="CHEBI:15377"/>
        <dbReference type="ChEBI" id="CHEBI:15378"/>
        <dbReference type="ChEBI" id="CHEBI:29985"/>
        <dbReference type="ChEBI" id="CHEBI:30616"/>
        <dbReference type="ChEBI" id="CHEBI:43474"/>
        <dbReference type="ChEBI" id="CHEBI:58359"/>
        <dbReference type="ChEBI" id="CHEBI:78515"/>
        <dbReference type="ChEBI" id="CHEBI:78516"/>
        <dbReference type="ChEBI" id="CHEBI:456216"/>
    </reaction>
</comment>
<comment type="subunit">
    <text evidence="1">Heterotrimer of A, B and C subunits.</text>
</comment>
<comment type="similarity">
    <text evidence="1">Belongs to the GatB/GatE family. GatB subfamily.</text>
</comment>
<sequence length="486" mass="54494">MTFIEGKTEKWEYVIGLEIHAQIKSNAKLFSSASTEFGSSPNSQVELLDAAMPGSLPVLNEFCVHQAIKTALGINAKINKLSIFDRKNYFYADLPAGYQISQFYHPIAQGGWIEILDENGNIKRIQINRLHIEQDTGKSTHDQSDTYSYIDLNRSGIALMEIVSEPDISSPMQAAEYIKKLRAILRYLDSCNGDMEKGSLRCDANISVRKPNSELGTKCEIKNLNSIKSIVRALEFEGQRQVNILESGGTVKQESLLFDATLGKTFPMRSKENATDYRYFPDPDLPPIILDQSLIDNIASSLPELPDAKIRRYINEIKLSDYNAQVLAADKDISCFFEEVIKTANPLLSANWILSELFGLMNKDGITINECKITANHFSELIQLISSKAISSKIAKTVLKEMFDSGKSPKIIMQEKNIQQISDPNQIADIIDDVLKDNYQSVVSYRNGKDRLFGFFVGQVMKKTAGNANPALINEILHTKLKQFQI</sequence>
<evidence type="ECO:0000255" key="1">
    <source>
        <dbReference type="HAMAP-Rule" id="MF_00121"/>
    </source>
</evidence>